<gene>
    <name type="primary">ZCCHC8</name>
</gene>
<sequence length="707" mass="78577">MAAEVYFGDLELFEPFDHPEESIPKPVHTRFKDDDGDEEDENGVGDAELRERLRQCEETIEQLRAENQELKRKLNILTRPSGILVNDTKLDGPILQILFMNNAISKQYHQEIEEFVSNLVKRFEEQQKNDVEKTSFNLLPQPSSIVLEEDHKVEESCAIKNNKEAFSVVGSVLYFTNFCLDKLGQPLLNENPQLSEGWEIPKYHQVFSHIVSLEGQEIQVKAKRPKPHCFNCGSEEHQMKDCPMPRNAARISEKRKEYMDACGEANNQNFQQRYHAEEVEERFGRFKPGVISEELQDALGVTDKSLPPFIYRMRQLGYPPGWLKEAELENSGLALYDGKDGTDGETEVGEIQQNKSVTYDLSKLVNYPGFNISTPRGIPDEWRIFGSIPMQACQQKDVFANYLTSNFQAPGVKSGNKRSSSHSSPGSPKKQKNESNSAGSPADMELDSDMEVPHGSQSSESFQFQPPLPPDTPPLPRGTPPPVFTPPLPKGTPPLTPSDSPQTRTASGAVDEDALTLEELEEQQRRIWAALEQAESVNSDSDVPVDTPLTGNSVASSPCPNELDLPVPEGKTSEKQTLDEPEVPEIFTKKSEAGHASSPDSEVTSLCQKEKAELAPVNTEGALLDNGSVVPNCDISNGGSQKLFPADTSPSTATKIHSPIPDMSKFATGITPFEFENMAESTGMYLRIRSLLKNSPRNQQKNKKASE</sequence>
<reference key="1">
    <citation type="journal article" date="2004" name="Nat. Genet.">
        <title>Complete sequencing and characterization of 21,243 full-length human cDNAs.</title>
        <authorList>
            <person name="Ota T."/>
            <person name="Suzuki Y."/>
            <person name="Nishikawa T."/>
            <person name="Otsuki T."/>
            <person name="Sugiyama T."/>
            <person name="Irie R."/>
            <person name="Wakamatsu A."/>
            <person name="Hayashi K."/>
            <person name="Sato H."/>
            <person name="Nagai K."/>
            <person name="Kimura K."/>
            <person name="Makita H."/>
            <person name="Sekine M."/>
            <person name="Obayashi M."/>
            <person name="Nishi T."/>
            <person name="Shibahara T."/>
            <person name="Tanaka T."/>
            <person name="Ishii S."/>
            <person name="Yamamoto J."/>
            <person name="Saito K."/>
            <person name="Kawai Y."/>
            <person name="Isono Y."/>
            <person name="Nakamura Y."/>
            <person name="Nagahari K."/>
            <person name="Murakami K."/>
            <person name="Yasuda T."/>
            <person name="Iwayanagi T."/>
            <person name="Wagatsuma M."/>
            <person name="Shiratori A."/>
            <person name="Sudo H."/>
            <person name="Hosoiri T."/>
            <person name="Kaku Y."/>
            <person name="Kodaira H."/>
            <person name="Kondo H."/>
            <person name="Sugawara M."/>
            <person name="Takahashi M."/>
            <person name="Kanda K."/>
            <person name="Yokoi T."/>
            <person name="Furuya T."/>
            <person name="Kikkawa E."/>
            <person name="Omura Y."/>
            <person name="Abe K."/>
            <person name="Kamihara K."/>
            <person name="Katsuta N."/>
            <person name="Sato K."/>
            <person name="Tanikawa M."/>
            <person name="Yamazaki M."/>
            <person name="Ninomiya K."/>
            <person name="Ishibashi T."/>
            <person name="Yamashita H."/>
            <person name="Murakawa K."/>
            <person name="Fujimori K."/>
            <person name="Tanai H."/>
            <person name="Kimata M."/>
            <person name="Watanabe M."/>
            <person name="Hiraoka S."/>
            <person name="Chiba Y."/>
            <person name="Ishida S."/>
            <person name="Ono Y."/>
            <person name="Takiguchi S."/>
            <person name="Watanabe S."/>
            <person name="Yosida M."/>
            <person name="Hotuta T."/>
            <person name="Kusano J."/>
            <person name="Kanehori K."/>
            <person name="Takahashi-Fujii A."/>
            <person name="Hara H."/>
            <person name="Tanase T.-O."/>
            <person name="Nomura Y."/>
            <person name="Togiya S."/>
            <person name="Komai F."/>
            <person name="Hara R."/>
            <person name="Takeuchi K."/>
            <person name="Arita M."/>
            <person name="Imose N."/>
            <person name="Musashino K."/>
            <person name="Yuuki H."/>
            <person name="Oshima A."/>
            <person name="Sasaki N."/>
            <person name="Aotsuka S."/>
            <person name="Yoshikawa Y."/>
            <person name="Matsunawa H."/>
            <person name="Ichihara T."/>
            <person name="Shiohata N."/>
            <person name="Sano S."/>
            <person name="Moriya S."/>
            <person name="Momiyama H."/>
            <person name="Satoh N."/>
            <person name="Takami S."/>
            <person name="Terashima Y."/>
            <person name="Suzuki O."/>
            <person name="Nakagawa S."/>
            <person name="Senoh A."/>
            <person name="Mizoguchi H."/>
            <person name="Goto Y."/>
            <person name="Shimizu F."/>
            <person name="Wakebe H."/>
            <person name="Hishigaki H."/>
            <person name="Watanabe T."/>
            <person name="Sugiyama A."/>
            <person name="Takemoto M."/>
            <person name="Kawakami B."/>
            <person name="Yamazaki M."/>
            <person name="Watanabe K."/>
            <person name="Kumagai A."/>
            <person name="Itakura S."/>
            <person name="Fukuzumi Y."/>
            <person name="Fujimori Y."/>
            <person name="Komiyama M."/>
            <person name="Tashiro H."/>
            <person name="Tanigami A."/>
            <person name="Fujiwara T."/>
            <person name="Ono T."/>
            <person name="Yamada K."/>
            <person name="Fujii Y."/>
            <person name="Ozaki K."/>
            <person name="Hirao M."/>
            <person name="Ohmori Y."/>
            <person name="Kawabata A."/>
            <person name="Hikiji T."/>
            <person name="Kobatake N."/>
            <person name="Inagaki H."/>
            <person name="Ikema Y."/>
            <person name="Okamoto S."/>
            <person name="Okitani R."/>
            <person name="Kawakami T."/>
            <person name="Noguchi S."/>
            <person name="Itoh T."/>
            <person name="Shigeta K."/>
            <person name="Senba T."/>
            <person name="Matsumura K."/>
            <person name="Nakajima Y."/>
            <person name="Mizuno T."/>
            <person name="Morinaga M."/>
            <person name="Sasaki M."/>
            <person name="Togashi T."/>
            <person name="Oyama M."/>
            <person name="Hata H."/>
            <person name="Watanabe M."/>
            <person name="Komatsu T."/>
            <person name="Mizushima-Sugano J."/>
            <person name="Satoh T."/>
            <person name="Shirai Y."/>
            <person name="Takahashi Y."/>
            <person name="Nakagawa K."/>
            <person name="Okumura K."/>
            <person name="Nagase T."/>
            <person name="Nomura N."/>
            <person name="Kikuchi H."/>
            <person name="Masuho Y."/>
            <person name="Yamashita R."/>
            <person name="Nakai K."/>
            <person name="Yada T."/>
            <person name="Nakamura Y."/>
            <person name="Ohara O."/>
            <person name="Isogai T."/>
            <person name="Sugano S."/>
        </authorList>
    </citation>
    <scope>NUCLEOTIDE SEQUENCE [LARGE SCALE MRNA] (ISOFORM 1)</scope>
    <source>
        <tissue>Embryo</tissue>
    </source>
</reference>
<reference key="2">
    <citation type="journal article" date="2007" name="BMC Genomics">
        <title>The full-ORF clone resource of the German cDNA consortium.</title>
        <authorList>
            <person name="Bechtel S."/>
            <person name="Rosenfelder H."/>
            <person name="Duda A."/>
            <person name="Schmidt C.P."/>
            <person name="Ernst U."/>
            <person name="Wellenreuther R."/>
            <person name="Mehrle A."/>
            <person name="Schuster C."/>
            <person name="Bahr A."/>
            <person name="Bloecker H."/>
            <person name="Heubner D."/>
            <person name="Hoerlein A."/>
            <person name="Michel G."/>
            <person name="Wedler H."/>
            <person name="Koehrer K."/>
            <person name="Ottenwaelder B."/>
            <person name="Poustka A."/>
            <person name="Wiemann S."/>
            <person name="Schupp I."/>
        </authorList>
    </citation>
    <scope>NUCLEOTIDE SEQUENCE [LARGE SCALE MRNA] (ISOFORM 2)</scope>
    <source>
        <tissue>Testis</tissue>
    </source>
</reference>
<reference key="3">
    <citation type="journal article" date="2004" name="Genome Res.">
        <title>The status, quality, and expansion of the NIH full-length cDNA project: the Mammalian Gene Collection (MGC).</title>
        <authorList>
            <consortium name="The MGC Project Team"/>
        </authorList>
    </citation>
    <scope>NUCLEOTIDE SEQUENCE [LARGE SCALE MRNA] (ISOFORM 1)</scope>
    <source>
        <tissue>Brain</tissue>
        <tissue>Duodenum</tissue>
    </source>
</reference>
<reference key="4">
    <citation type="journal article" date="2002" name="RNA">
        <title>Purification and characterization of native spliceosomes suitable for three-dimensional structural analysis.</title>
        <authorList>
            <person name="Jurica M.S."/>
            <person name="Licklider L.J."/>
            <person name="Gygi S.P."/>
            <person name="Grigorieff N."/>
            <person name="Moore M.J."/>
        </authorList>
    </citation>
    <scope>IDENTIFICATION BY MASS SPECTROMETRY</scope>
    <scope>IDENTIFICATION IN THE SPLICEOSOMAL C COMPLEX</scope>
</reference>
<reference key="5">
    <citation type="journal article" date="2005" name="Biochem. Biophys. Res. Commun.">
        <title>Zcchc8 is a glycogen synthase kinase-3 substrate that interacts with RNA-binding proteins.</title>
        <authorList>
            <person name="Gustafson M.P."/>
            <person name="Welcker M."/>
            <person name="Hwang H.C."/>
            <person name="Clurman B.E."/>
        </authorList>
    </citation>
    <scope>FUNCTION</scope>
    <scope>PHOSPHORYLATION AT THR-492</scope>
    <scope>MUTAGENESIS OF THR-492</scope>
    <scope>PTM</scope>
    <scope>INTERACTION WITH MTREX AND RBM7</scope>
    <scope>SUBCELLULAR LOCATION</scope>
    <scope>INDUCTION</scope>
</reference>
<reference key="6">
    <citation type="journal article" date="2007" name="Science">
        <title>ATM and ATR substrate analysis reveals extensive protein networks responsive to DNA damage.</title>
        <authorList>
            <person name="Matsuoka S."/>
            <person name="Ballif B.A."/>
            <person name="Smogorzewska A."/>
            <person name="McDonald E.R. III"/>
            <person name="Hurov K.E."/>
            <person name="Luo J."/>
            <person name="Bakalarski C.E."/>
            <person name="Zhao Z."/>
            <person name="Solimini N."/>
            <person name="Lerenthal Y."/>
            <person name="Shiloh Y."/>
            <person name="Gygi S.P."/>
            <person name="Elledge S.J."/>
        </authorList>
    </citation>
    <scope>IDENTIFICATION BY MASS SPECTROMETRY [LARGE SCALE ANALYSIS]</scope>
    <source>
        <tissue>Embryonic kidney</tissue>
    </source>
</reference>
<reference key="7">
    <citation type="journal article" date="2008" name="Proc. Natl. Acad. Sci. U.S.A.">
        <title>A quantitative atlas of mitotic phosphorylation.</title>
        <authorList>
            <person name="Dephoure N."/>
            <person name="Zhou C."/>
            <person name="Villen J."/>
            <person name="Beausoleil S.A."/>
            <person name="Bakalarski C.E."/>
            <person name="Elledge S.J."/>
            <person name="Gygi S.P."/>
        </authorList>
    </citation>
    <scope>PHOSPHORYLATION [LARGE SCALE ANALYSIS] AT SER-598 AND SER-658</scope>
    <scope>IDENTIFICATION BY MASS SPECTROMETRY [LARGE SCALE ANALYSIS]</scope>
    <source>
        <tissue>Cervix carcinoma</tissue>
    </source>
</reference>
<reference key="8">
    <citation type="journal article" date="2009" name="Anal. Chem.">
        <title>Lys-N and trypsin cover complementary parts of the phosphoproteome in a refined SCX-based approach.</title>
        <authorList>
            <person name="Gauci S."/>
            <person name="Helbig A.O."/>
            <person name="Slijper M."/>
            <person name="Krijgsveld J."/>
            <person name="Heck A.J."/>
            <person name="Mohammed S."/>
        </authorList>
    </citation>
    <scope>ACETYLATION [LARGE SCALE ANALYSIS] AT ALA-2</scope>
    <scope>CLEAVAGE OF INITIATOR METHIONINE [LARGE SCALE ANALYSIS]</scope>
    <scope>IDENTIFICATION BY MASS SPECTROMETRY [LARGE SCALE ANALYSIS]</scope>
</reference>
<reference key="9">
    <citation type="journal article" date="2009" name="Sci. Signal.">
        <title>Quantitative phosphoproteomic analysis of T cell receptor signaling reveals system-wide modulation of protein-protein interactions.</title>
        <authorList>
            <person name="Mayya V."/>
            <person name="Lundgren D.H."/>
            <person name="Hwang S.-I."/>
            <person name="Rezaul K."/>
            <person name="Wu L."/>
            <person name="Eng J.K."/>
            <person name="Rodionov V."/>
            <person name="Han D.K."/>
        </authorList>
    </citation>
    <scope>PHOSPHORYLATION [LARGE SCALE ANALYSIS] AT SER-658</scope>
    <scope>IDENTIFICATION BY MASS SPECTROMETRY [LARGE SCALE ANALYSIS]</scope>
    <source>
        <tissue>Leukemic T-cell</tissue>
    </source>
</reference>
<reference key="10">
    <citation type="journal article" date="2010" name="Sci. Signal.">
        <title>Quantitative phosphoproteomics reveals widespread full phosphorylation site occupancy during mitosis.</title>
        <authorList>
            <person name="Olsen J.V."/>
            <person name="Vermeulen M."/>
            <person name="Santamaria A."/>
            <person name="Kumar C."/>
            <person name="Miller M.L."/>
            <person name="Jensen L.J."/>
            <person name="Gnad F."/>
            <person name="Cox J."/>
            <person name="Jensen T.S."/>
            <person name="Nigg E.A."/>
            <person name="Brunak S."/>
            <person name="Mann M."/>
        </authorList>
    </citation>
    <scope>PHOSPHORYLATION [LARGE SCALE ANALYSIS] AT THR-479; THR-485 AND SER-658</scope>
    <scope>IDENTIFICATION BY MASS SPECTROMETRY [LARGE SCALE ANALYSIS]</scope>
    <source>
        <tissue>Cervix carcinoma</tissue>
    </source>
</reference>
<reference key="11">
    <citation type="journal article" date="2011" name="BMC Syst. Biol.">
        <title>Initial characterization of the human central proteome.</title>
        <authorList>
            <person name="Burkard T.R."/>
            <person name="Planyavsky M."/>
            <person name="Kaupe I."/>
            <person name="Breitwieser F.P."/>
            <person name="Buerckstuemmer T."/>
            <person name="Bennett K.L."/>
            <person name="Superti-Furga G."/>
            <person name="Colinge J."/>
        </authorList>
    </citation>
    <scope>IDENTIFICATION BY MASS SPECTROMETRY [LARGE SCALE ANALYSIS]</scope>
</reference>
<reference key="12">
    <citation type="journal article" date="2011" name="Mol. Cell">
        <title>Interaction profiling identifies the human nuclear exosome targeting complex.</title>
        <authorList>
            <person name="Lubas M."/>
            <person name="Christensen M.S."/>
            <person name="Kristiansen M.S."/>
            <person name="Domanski M."/>
            <person name="Falkenby L.G."/>
            <person name="Lykke-Andersen S."/>
            <person name="Andersen J.S."/>
            <person name="Dziembowski A."/>
            <person name="Jensen T.H."/>
        </authorList>
    </citation>
    <scope>IDENTIFICATION IN A TRAMP-LIKE COMPLEX</scope>
    <scope>SUBUNIT</scope>
    <scope>SUBCELLULAR LOCATION</scope>
</reference>
<reference key="13">
    <citation type="journal article" date="2011" name="Sci. Signal.">
        <title>System-wide temporal characterization of the proteome and phosphoproteome of human embryonic stem cell differentiation.</title>
        <authorList>
            <person name="Rigbolt K.T."/>
            <person name="Prokhorova T.A."/>
            <person name="Akimov V."/>
            <person name="Henningsen J."/>
            <person name="Johansen P.T."/>
            <person name="Kratchmarova I."/>
            <person name="Kassem M."/>
            <person name="Mann M."/>
            <person name="Olsen J.V."/>
            <person name="Blagoev B."/>
        </authorList>
    </citation>
    <scope>IDENTIFICATION BY MASS SPECTROMETRY [LARGE SCALE ANALYSIS]</scope>
</reference>
<reference key="14">
    <citation type="journal article" date="2012" name="Biochem. Soc. Trans.">
        <title>Comparison of the yeast and human nuclear exosome complexes.</title>
        <authorList>
            <person name="Sloan K.E."/>
            <person name="Schneider C."/>
            <person name="Watkins N.J."/>
        </authorList>
    </citation>
    <scope>REVIEW ON RNA EXOSOMES</scope>
</reference>
<reference key="15">
    <citation type="journal article" date="2013" name="J. Proteome Res.">
        <title>Toward a comprehensive characterization of a human cancer cell phosphoproteome.</title>
        <authorList>
            <person name="Zhou H."/>
            <person name="Di Palma S."/>
            <person name="Preisinger C."/>
            <person name="Peng M."/>
            <person name="Polat A.N."/>
            <person name="Heck A.J."/>
            <person name="Mohammed S."/>
        </authorList>
    </citation>
    <scope>PHOSPHORYLATION [LARGE SCALE ANALYSIS] AT THR-342; THR-479; THR-485; THR-492; THR-577; SER-598; THR-648; SER-649; SER-658 AND SER-695</scope>
    <scope>IDENTIFICATION BY MASS SPECTROMETRY [LARGE SCALE ANALYSIS]</scope>
    <source>
        <tissue>Cervix carcinoma</tissue>
        <tissue>Erythroleukemia</tissue>
    </source>
</reference>
<reference key="16">
    <citation type="journal article" date="2014" name="J. Proteomics">
        <title>An enzyme assisted RP-RPLC approach for in-depth analysis of human liver phosphoproteome.</title>
        <authorList>
            <person name="Bian Y."/>
            <person name="Song C."/>
            <person name="Cheng K."/>
            <person name="Dong M."/>
            <person name="Wang F."/>
            <person name="Huang J."/>
            <person name="Sun D."/>
            <person name="Wang L."/>
            <person name="Ye M."/>
            <person name="Zou H."/>
        </authorList>
    </citation>
    <scope>PHOSPHORYLATION [LARGE SCALE ANALYSIS] AT THR-472; THR-479; THR-492 AND SER-658</scope>
    <scope>IDENTIFICATION BY MASS SPECTROMETRY [LARGE SCALE ANALYSIS]</scope>
    <source>
        <tissue>Liver</tissue>
    </source>
</reference>
<reference key="17">
    <citation type="journal article" date="2016" name="Mol. Cell">
        <title>Identification of a nuclear exosome decay pathway for processed transcripts.</title>
        <authorList>
            <person name="Meola N."/>
            <person name="Domanski M."/>
            <person name="Karadoulama E."/>
            <person name="Chen Y."/>
            <person name="Gentil C."/>
            <person name="Pultz D."/>
            <person name="Vitting-Seerup K."/>
            <person name="Lykke-Andersen S."/>
            <person name="Andersen J.S."/>
            <person name="Sandelin A."/>
            <person name="Jensen T.H."/>
        </authorList>
    </citation>
    <scope>FUNCTION</scope>
    <scope>SUBUNIT</scope>
    <scope>INTERACTION WITH RBM7 AND MTREX</scope>
</reference>
<reference key="18">
    <citation type="journal article" date="2017" name="Nat. Struct. Mol. Biol.">
        <title>Site-specific mapping of the human SUMO proteome reveals co-modification with phosphorylation.</title>
        <authorList>
            <person name="Hendriks I.A."/>
            <person name="Lyon D."/>
            <person name="Young C."/>
            <person name="Jensen L.J."/>
            <person name="Vertegaal A.C."/>
            <person name="Nielsen M.L."/>
        </authorList>
    </citation>
    <scope>SUMOYLATION [LARGE SCALE ANALYSIS] AT LYS-413</scope>
    <scope>IDENTIFICATION BY MASS SPECTROMETRY [LARGE SCALE ANALYSIS]</scope>
</reference>
<reference key="19">
    <citation type="journal article" date="2019" name="Genes Dev.">
        <title>ZCCHC8, the nuclear exosome targeting component, is mutated in familial pulmonary fibrosis and is required for telomerase RNA maturation.</title>
        <authorList>
            <person name="Gable D.L."/>
            <person name="Gaysinskaya V."/>
            <person name="Atik C.C."/>
            <person name="Talbot C.C. Jr."/>
            <person name="Kang B."/>
            <person name="Stanley S.E."/>
            <person name="Pugh E.W."/>
            <person name="Amat-Codina N."/>
            <person name="Schenk K.M."/>
            <person name="Arcasoy M.O."/>
            <person name="Brayton C."/>
            <person name="Florea L."/>
            <person name="Armanios M."/>
        </authorList>
    </citation>
    <scope>FUNCTION</scope>
    <scope>INTERACTION WITH TERC</scope>
    <scope>INVOLVEMENT IN PFBMFT5</scope>
    <scope>VARIANT PFBMFT5 LEU-186</scope>
    <scope>CHARACTERIZATION OF VARIANT PFBMFT5 LEU-186</scope>
</reference>
<reference evidence="15 16" key="20">
    <citation type="journal article" date="2016" name="Nat. Commun.">
        <title>Structure of the RBM7-ZCCHC8 core of the NEXT complex reveals connections to splicing factors.</title>
        <authorList>
            <person name="Falk S."/>
            <person name="Finogenova K."/>
            <person name="Melko M."/>
            <person name="Benda C."/>
            <person name="Lykke-Andersen S."/>
            <person name="Jensen T.H."/>
            <person name="Conti E."/>
        </authorList>
    </citation>
    <scope>X-RAY CRYSTALLOGRAPHY (2.00 ANGSTROMS) OF 285-324 IN COMPLEX WITH RBM7 AND MTREX</scope>
    <scope>SUBUNIT</scope>
    <scope>INTERACTION WITH RBM7 AND MTREX</scope>
    <scope>MUTAGENESIS OF LEU-295; LEU-299; PHE-309 AND MET-313</scope>
</reference>
<reference evidence="17" key="21">
    <citation type="journal article" date="2018" name="Proc. Natl. Acad. Sci. U.S.A.">
        <title>Structural basis for MTR4-ZCCHC8 interactions that stimulate the MTR4 helicase in the nuclear exosome-targeting complex.</title>
        <authorList>
            <person name="Puno M.R."/>
            <person name="Lima C.D."/>
        </authorList>
    </citation>
    <scope>X-RAY CRYSTALLOGRAPHY (2.20 ANGSTROMS) OF 659-707 IN COMPLEX WITH MTREX</scope>
    <scope>INTERACTION WITH MTREX</scope>
    <scope>MUTAGENESIS OF ASP-662; PHE-666; PHE-673; GLU-674; PHE-675; GLU-676; ILE-688 AND LEU-692</scope>
    <scope>REGION</scope>
    <scope>DOMAIN</scope>
</reference>
<name>ZCHC8_HUMAN</name>
<evidence type="ECO:0000255" key="1"/>
<evidence type="ECO:0000255" key="2">
    <source>
        <dbReference type="PROSITE-ProRule" id="PRU00047"/>
    </source>
</evidence>
<evidence type="ECO:0000255" key="3">
    <source>
        <dbReference type="PROSITE-ProRule" id="PRU00768"/>
    </source>
</evidence>
<evidence type="ECO:0000256" key="4">
    <source>
        <dbReference type="SAM" id="MobiDB-lite"/>
    </source>
</evidence>
<evidence type="ECO:0000269" key="5">
    <source>
    </source>
</evidence>
<evidence type="ECO:0000269" key="6">
    <source>
    </source>
</evidence>
<evidence type="ECO:0000269" key="7">
    <source>
    </source>
</evidence>
<evidence type="ECO:0000269" key="8">
    <source>
    </source>
</evidence>
<evidence type="ECO:0000269" key="9">
    <source>
    </source>
</evidence>
<evidence type="ECO:0000269" key="10">
    <source>
    </source>
</evidence>
<evidence type="ECO:0000269" key="11">
    <source>
    </source>
</evidence>
<evidence type="ECO:0000303" key="12">
    <source>
    </source>
</evidence>
<evidence type="ECO:0000305" key="13"/>
<evidence type="ECO:0000305" key="14">
    <source>
    </source>
</evidence>
<evidence type="ECO:0007744" key="15">
    <source>
        <dbReference type="PDB" id="5LXR"/>
    </source>
</evidence>
<evidence type="ECO:0007744" key="16">
    <source>
        <dbReference type="PDB" id="5LXY"/>
    </source>
</evidence>
<evidence type="ECO:0007744" key="17">
    <source>
        <dbReference type="PDB" id="6C90"/>
    </source>
</evidence>
<evidence type="ECO:0007744" key="18">
    <source>
    </source>
</evidence>
<evidence type="ECO:0007744" key="19">
    <source>
    </source>
</evidence>
<evidence type="ECO:0007744" key="20">
    <source>
    </source>
</evidence>
<evidence type="ECO:0007744" key="21">
    <source>
    </source>
</evidence>
<evidence type="ECO:0007744" key="22">
    <source>
    </source>
</evidence>
<evidence type="ECO:0007744" key="23">
    <source>
    </source>
</evidence>
<evidence type="ECO:0007744" key="24">
    <source>
    </source>
</evidence>
<evidence type="ECO:0007829" key="25">
    <source>
        <dbReference type="PDB" id="5LXR"/>
    </source>
</evidence>
<evidence type="ECO:0007829" key="26">
    <source>
        <dbReference type="PDB" id="6C90"/>
    </source>
</evidence>
<proteinExistence type="evidence at protein level"/>
<comment type="function">
    <text evidence="8 11 14">Scaffolding subunit of the trimeric nuclear exosome targeting (NEXT) complex that is involved in the surveillance and turnover of aberrant transcripts and non-coding RNAs (PubMed:27871484). NEXT functions as an RNA exosome cofactor that directs a subset of non-coding short-lived RNAs for exosomal degradation. May be involved in pre-mRNA splicing (Probable). It is required for 3'-end maturation of telomerase RNA component (TERC), TERC 3'-end targeting to the nuclear RNA exosome, and for telomerase function (PubMed:31488579).</text>
</comment>
<comment type="subunit">
    <text evidence="5 6 7 10 11">Component of a nuclear TRAMP-like complex, an ATP-dependent exosome regulatory complex consisting of a helicase (MTREX), an oligadenylate polymerase (TENT4B or TENT4A), and a substrate specific RNA-binding factor (ZCCHC7 or ZCCHC8). Several TRAMP-like complexes exist with specific compositions and are associated with nuclear, or nucleolar RNA exosomes. Identified in the spliceosome C complex. Component of the nuclear exosome targeting (NEXT) complex composed of MTREX, ZCCHC8, and RBM7 that directs a subset of non-coding short-lived RNAs for exosomal degradation (PubMed:27871484, PubMed:27905398). Interacts with proteins involved in RNA processing and degradation such as MTREX and RBM7; interaction with MTREX enhances MTREX RNA helicase activity and bridges between RBM7 and MTREX (PubMed:16263084, PubMed:27871484, PubMed:27905398). Interacts with TERC, the telomerase RNA component (PubMed:31488579).</text>
</comment>
<comment type="interaction">
    <interactant intactId="EBI-1263058">
        <id>Q6NZY4</id>
    </interactant>
    <interactant intactId="EBI-349905">
        <id>P38398</id>
        <label>BRCA1</label>
    </interactant>
    <organismsDiffer>false</organismsDiffer>
    <experiments>2</experiments>
</comment>
<comment type="interaction">
    <interactant intactId="EBI-1263058">
        <id>Q6NZY4</id>
    </interactant>
    <interactant intactId="EBI-741332">
        <id>P57052</id>
        <label>RBM11</label>
    </interactant>
    <organismsDiffer>false</organismsDiffer>
    <experiments>4</experiments>
</comment>
<comment type="interaction">
    <interactant intactId="EBI-1263058">
        <id>Q6NZY4</id>
    </interactant>
    <interactant intactId="EBI-746903">
        <id>Q9Y580</id>
        <label>RBM7</label>
    </interactant>
    <organismsDiffer>false</organismsDiffer>
    <experiments>13</experiments>
</comment>
<comment type="subcellular location">
    <subcellularLocation>
        <location evidence="6 7">Nucleus</location>
        <location evidence="6 7">Nucleoplasm</location>
    </subcellularLocation>
    <subcellularLocation>
        <location evidence="3">Nucleus</location>
    </subcellularLocation>
    <text evidence="7">Excluded from nucleolus.</text>
</comment>
<comment type="alternative products">
    <event type="alternative splicing"/>
    <isoform>
        <id>Q6NZY4-1</id>
        <name>1</name>
        <sequence type="displayed"/>
    </isoform>
    <isoform>
        <id>Q6NZY4-2</id>
        <name>2</name>
        <sequence type="described" ref="VSP_013717"/>
    </isoform>
</comment>
<comment type="induction">
    <text evidence="6">Slight accumulation in cells entering S phase of the cell cycle.</text>
</comment>
<comment type="domain">
    <text evidence="10">The C-terminal part (659-707) contributes to MTREX RNA helicase activity, in part, by enhancing its RNA-dependent ATPase activity.</text>
</comment>
<comment type="PTM">
    <text evidence="6">Phosphorylation at Thr-492 by GSK3 is triggered in cells entering mitosis; this phosphorylation is greatly enhanced by nocodazole treatment, but reduced by lithium.</text>
</comment>
<comment type="disease" evidence="11">
    <disease id="DI-05708">
        <name>Pulmonary fibrosis, and/or bone marrow failure syndrome, telomere-related, 5</name>
        <acronym>PFBMFT5</acronym>
        <description>A disease associated with shortened telomeres. Pulmonary fibrosis is the most common manifestation. Other manifestations include aplastic anemia due to bone marrow failure, hepatic fibrosis, and increased cancer risk, particularly myelodysplastic syndrome and acute myeloid leukemia. Phenotype, age at onset, and severity are determined by telomere length. PFBMFT5 inheritance is autosomal dominant.</description>
        <dbReference type="MIM" id="618674"/>
    </disease>
    <text>The disease may be caused by variants affecting the gene represented in this entry.</text>
</comment>
<comment type="similarity">
    <text evidence="13">Belongs to the ZCCHC8 family.</text>
</comment>
<keyword id="KW-0002">3D-structure</keyword>
<keyword id="KW-0007">Acetylation</keyword>
<keyword id="KW-0025">Alternative splicing</keyword>
<keyword id="KW-0175">Coiled coil</keyword>
<keyword id="KW-0225">Disease variant</keyword>
<keyword id="KW-1017">Isopeptide bond</keyword>
<keyword id="KW-0479">Metal-binding</keyword>
<keyword id="KW-0507">mRNA processing</keyword>
<keyword id="KW-0508">mRNA splicing</keyword>
<keyword id="KW-0539">Nucleus</keyword>
<keyword id="KW-0597">Phosphoprotein</keyword>
<keyword id="KW-1267">Proteomics identification</keyword>
<keyword id="KW-1185">Reference proteome</keyword>
<keyword id="KW-0747">Spliceosome</keyword>
<keyword id="KW-0832">Ubl conjugation</keyword>
<keyword id="KW-0862">Zinc</keyword>
<keyword id="KW-0863">Zinc-finger</keyword>
<feature type="initiator methionine" description="Removed" evidence="19">
    <location>
        <position position="1"/>
    </location>
</feature>
<feature type="chain" id="PRO_0000150960" description="Zinc finger CCHC domain-containing protein 8">
    <location>
        <begin position="2"/>
        <end position="707"/>
    </location>
</feature>
<feature type="zinc finger region" description="CCHC-type" evidence="2">
    <location>
        <begin position="227"/>
        <end position="244"/>
    </location>
</feature>
<feature type="region of interest" description="Disordered" evidence="4">
    <location>
        <begin position="16"/>
        <end position="44"/>
    </location>
</feature>
<feature type="region of interest" description="RBM7 binding" evidence="9 15 16">
    <location>
        <begin position="286"/>
        <end position="299"/>
    </location>
</feature>
<feature type="region of interest" description="RBM7 binding" evidence="9 15 16">
    <location>
        <begin position="309"/>
        <end position="324"/>
    </location>
</feature>
<feature type="region of interest" description="Disordered" evidence="4">
    <location>
        <begin position="409"/>
        <end position="518"/>
    </location>
</feature>
<feature type="region of interest" description="Disordered" evidence="4">
    <location>
        <begin position="531"/>
        <end position="607"/>
    </location>
</feature>
<feature type="region of interest" description="Disordered" evidence="4">
    <location>
        <begin position="641"/>
        <end position="660"/>
    </location>
</feature>
<feature type="region of interest" description="MTREX binding" evidence="10 17">
    <location>
        <begin position="659"/>
        <end position="707"/>
    </location>
</feature>
<feature type="coiled-coil region" evidence="1">
    <location>
        <begin position="45"/>
        <end position="80"/>
    </location>
</feature>
<feature type="coiled-coil region" evidence="1">
    <location>
        <begin position="516"/>
        <end position="539"/>
    </location>
</feature>
<feature type="compositionally biased region" description="Acidic residues" evidence="4">
    <location>
        <begin position="34"/>
        <end position="43"/>
    </location>
</feature>
<feature type="compositionally biased region" description="Low complexity" evidence="4">
    <location>
        <begin position="456"/>
        <end position="465"/>
    </location>
</feature>
<feature type="compositionally biased region" description="Pro residues" evidence="4">
    <location>
        <begin position="466"/>
        <end position="496"/>
    </location>
</feature>
<feature type="compositionally biased region" description="Polar residues" evidence="4">
    <location>
        <begin position="549"/>
        <end position="559"/>
    </location>
</feature>
<feature type="compositionally biased region" description="Polar residues" evidence="4">
    <location>
        <begin position="598"/>
        <end position="607"/>
    </location>
</feature>
<feature type="modified residue" description="N-acetylalanine" evidence="19">
    <location>
        <position position="2"/>
    </location>
</feature>
<feature type="modified residue" description="Phosphothreonine" evidence="22">
    <location>
        <position position="342"/>
    </location>
</feature>
<feature type="modified residue" description="Phosphothreonine" evidence="23">
    <location>
        <position position="472"/>
    </location>
</feature>
<feature type="modified residue" description="Phosphothreonine" evidence="21 22 23">
    <location>
        <position position="479"/>
    </location>
</feature>
<feature type="modified residue" description="Phosphothreonine" evidence="21 22">
    <location>
        <position position="485"/>
    </location>
</feature>
<feature type="modified residue" description="Phosphothreonine; by GSK3" evidence="6 22 23">
    <location>
        <position position="492"/>
    </location>
</feature>
<feature type="modified residue" description="Phosphothreonine" evidence="22">
    <location>
        <position position="577"/>
    </location>
</feature>
<feature type="modified residue" description="Phosphoserine" evidence="18 22">
    <location>
        <position position="598"/>
    </location>
</feature>
<feature type="modified residue" description="Phosphothreonine" evidence="22">
    <location>
        <position position="648"/>
    </location>
</feature>
<feature type="modified residue" description="Phosphoserine" evidence="22">
    <location>
        <position position="649"/>
    </location>
</feature>
<feature type="modified residue" description="Phosphoserine" evidence="18 20 21 22 23">
    <location>
        <position position="658"/>
    </location>
</feature>
<feature type="modified residue" description="Phosphoserine" evidence="22">
    <location>
        <position position="695"/>
    </location>
</feature>
<feature type="cross-link" description="Glycyl lysine isopeptide (Lys-Gly) (interchain with G-Cter in SUMO2)" evidence="24">
    <location>
        <position position="413"/>
    </location>
</feature>
<feature type="splice variant" id="VSP_013717" description="In isoform 2." evidence="12">
    <location>
        <begin position="1"/>
        <end position="238"/>
    </location>
</feature>
<feature type="sequence variant" id="VAR_083448" description="In PFBMFT5; decreased levels of mature TERC in patient cells consistent with impaired function in RNA processing; decreased levels of mutant protein in patient cells; dbSNP:rs1317757765." evidence="11">
    <original>P</original>
    <variation>L</variation>
    <location>
        <position position="186"/>
    </location>
</feature>
<feature type="sequence variant" id="VAR_034585" description="In dbSNP:rs1063155.">
    <original>P</original>
    <variation>A</variation>
    <location>
        <position position="672"/>
    </location>
</feature>
<feature type="mutagenesis site" description="Impaired interaction with ZCCHC8; when associated with E-299." evidence="9">
    <original>L</original>
    <variation>E</variation>
    <location>
        <position position="295"/>
    </location>
</feature>
<feature type="mutagenesis site" description="Impaired interaction with ZCCHC8; when associated with E-295." evidence="9">
    <original>L</original>
    <variation>E</variation>
    <location>
        <position position="299"/>
    </location>
</feature>
<feature type="mutagenesis site" description="Reduced interaction with ZCCHC8; when associated with E-313." evidence="9">
    <original>F</original>
    <variation>A</variation>
    <location>
        <position position="309"/>
    </location>
</feature>
<feature type="mutagenesis site" description="Reduced interaction with ZCCHC8; when associated with A-309." evidence="9">
    <original>M</original>
    <variation>E</variation>
    <location>
        <position position="313"/>
    </location>
</feature>
<feature type="mutagenesis site" description="Impaired phosphorylation by GSK3." evidence="6">
    <original>T</original>
    <variation>A</variation>
    <location>
        <position position="492"/>
    </location>
</feature>
<feature type="mutagenesis site" description="Does not alter RNA helicase activity of NEXT complex; when associated with K-666." evidence="10">
    <original>D</original>
    <variation>A</variation>
    <location>
        <position position="662"/>
    </location>
</feature>
<feature type="mutagenesis site" description="Does not alter RNA helicase activity of NEXT complex; when associated with A-662." evidence="10">
    <original>F</original>
    <variation>K</variation>
    <location>
        <position position="666"/>
    </location>
</feature>
<feature type="mutagenesis site" description="Does not affect RNA helicase activity of NEXT complex; when associated with A-675." evidence="10">
    <original>F</original>
    <variation>A</variation>
    <location>
        <position position="673"/>
    </location>
</feature>
<feature type="mutagenesis site" description="Does not affect RNA helicase activity of NEXT complex; when associated with A-676." evidence="10">
    <original>E</original>
    <variation>A</variation>
    <location>
        <position position="674"/>
    </location>
</feature>
<feature type="mutagenesis site" description="Does not affect RNA helicase activity of NEXT complex; when associated with A-673." evidence="10">
    <original>F</original>
    <variation>A</variation>
    <location>
        <position position="675"/>
    </location>
</feature>
<feature type="mutagenesis site" description="Does not affect RNA helicase activity of NEXT complex; when associated with A-674." evidence="10">
    <original>E</original>
    <variation>A</variation>
    <location>
        <position position="676"/>
    </location>
</feature>
<feature type="mutagenesis site" description="Loss of RNA helicase activity of NEXT complex; when associated with E-692." evidence="10">
    <original>I</original>
    <variation>E</variation>
    <location>
        <position position="688"/>
    </location>
</feature>
<feature type="mutagenesis site" description="Loss of RNA helicase activity of NEXT complex; when associated with E-688." evidence="10">
    <original>L</original>
    <variation>E</variation>
    <location>
        <position position="692"/>
    </location>
</feature>
<feature type="sequence conflict" description="In Ref. 1; BAB55308." evidence="13" ref="1">
    <original>E</original>
    <variation>G</variation>
    <location>
        <position position="20"/>
    </location>
</feature>
<feature type="sequence conflict" description="In Ref. 3; AAH17704." evidence="13" ref="3">
    <original>QEIQ</original>
    <variation>DAWV</variation>
    <location>
        <begin position="216"/>
        <end position="219"/>
    </location>
</feature>
<feature type="sequence conflict" description="In Ref. 3; AAH65918." evidence="13" ref="3">
    <original>A</original>
    <variation>V</variation>
    <location>
        <position position="326"/>
    </location>
</feature>
<feature type="sequence conflict" description="In Ref. 1; BAB55308." evidence="13" ref="1">
    <original>S</original>
    <variation>G</variation>
    <location>
        <position position="461"/>
    </location>
</feature>
<feature type="sequence conflict" description="In Ref. 1; BAC11105." evidence="13" ref="1">
    <original>E</original>
    <variation>G</variation>
    <location>
        <position position="582"/>
    </location>
</feature>
<feature type="sequence conflict" description="In Ref. 2; CAB75658." evidence="13" ref="2">
    <original>M</original>
    <variation>V</variation>
    <location>
        <position position="663"/>
    </location>
</feature>
<feature type="helix" evidence="25">
    <location>
        <begin position="293"/>
        <end position="299"/>
    </location>
</feature>
<feature type="helix" evidence="25">
    <location>
        <begin position="308"/>
        <end position="316"/>
    </location>
</feature>
<feature type="helix" evidence="25">
    <location>
        <begin position="320"/>
        <end position="322"/>
    </location>
</feature>
<feature type="helix" evidence="26">
    <location>
        <begin position="663"/>
        <end position="667"/>
    </location>
</feature>
<feature type="helix" evidence="26">
    <location>
        <begin position="684"/>
        <end position="690"/>
    </location>
</feature>
<feature type="helix" evidence="26">
    <location>
        <begin position="696"/>
        <end position="699"/>
    </location>
</feature>
<organism>
    <name type="scientific">Homo sapiens</name>
    <name type="common">Human</name>
    <dbReference type="NCBI Taxonomy" id="9606"/>
    <lineage>
        <taxon>Eukaryota</taxon>
        <taxon>Metazoa</taxon>
        <taxon>Chordata</taxon>
        <taxon>Craniata</taxon>
        <taxon>Vertebrata</taxon>
        <taxon>Euteleostomi</taxon>
        <taxon>Mammalia</taxon>
        <taxon>Eutheria</taxon>
        <taxon>Euarchontoglires</taxon>
        <taxon>Primates</taxon>
        <taxon>Haplorrhini</taxon>
        <taxon>Catarrhini</taxon>
        <taxon>Hominidae</taxon>
        <taxon>Homo</taxon>
    </lineage>
</organism>
<dbReference type="EMBL" id="AK027702">
    <property type="protein sequence ID" value="BAB55308.1"/>
    <property type="molecule type" value="mRNA"/>
</dbReference>
<dbReference type="EMBL" id="AK074638">
    <property type="protein sequence ID" value="BAC11105.1"/>
    <property type="molecule type" value="mRNA"/>
</dbReference>
<dbReference type="EMBL" id="AL157433">
    <property type="protein sequence ID" value="CAB75657.1"/>
    <property type="molecule type" value="mRNA"/>
</dbReference>
<dbReference type="EMBL" id="AL157434">
    <property type="protein sequence ID" value="CAB75658.1"/>
    <property type="molecule type" value="mRNA"/>
</dbReference>
<dbReference type="EMBL" id="BC017704">
    <property type="protein sequence ID" value="AAH17704.2"/>
    <property type="molecule type" value="mRNA"/>
</dbReference>
<dbReference type="EMBL" id="BC065918">
    <property type="protein sequence ID" value="AAH65918.1"/>
    <property type="molecule type" value="mRNA"/>
</dbReference>
<dbReference type="CCDS" id="CCDS86340.1">
    <molecule id="Q6NZY4-2"/>
</dbReference>
<dbReference type="CCDS" id="CCDS91763.1">
    <molecule id="Q6NZY4-1"/>
</dbReference>
<dbReference type="PIR" id="T46929">
    <property type="entry name" value="T46929"/>
</dbReference>
<dbReference type="PIR" id="T46930">
    <property type="entry name" value="T46930"/>
</dbReference>
<dbReference type="RefSeq" id="NP_001337866.1">
    <molecule id="Q6NZY4-2"/>
    <property type="nucleotide sequence ID" value="NM_001350937.2"/>
</dbReference>
<dbReference type="RefSeq" id="NP_001337867.1">
    <molecule id="Q6NZY4-2"/>
    <property type="nucleotide sequence ID" value="NM_001350938.2"/>
</dbReference>
<dbReference type="RefSeq" id="NP_060082.2">
    <molecule id="Q6NZY4-1"/>
    <property type="nucleotide sequence ID" value="NM_017612.4"/>
</dbReference>
<dbReference type="PDB" id="5LXR">
    <property type="method" value="X-ray"/>
    <property type="resolution" value="2.00 A"/>
    <property type="chains" value="B=285-324"/>
</dbReference>
<dbReference type="PDB" id="5LXY">
    <property type="method" value="X-ray"/>
    <property type="resolution" value="2.85 A"/>
    <property type="chains" value="C/D/F/H/J/L/N=285-324"/>
</dbReference>
<dbReference type="PDB" id="6C90">
    <property type="method" value="X-ray"/>
    <property type="resolution" value="2.20 A"/>
    <property type="chains" value="B=659-707"/>
</dbReference>
<dbReference type="PDB" id="7S7B">
    <property type="method" value="EM"/>
    <property type="resolution" value="4.06 A"/>
    <property type="chains" value="B/F=1-707"/>
</dbReference>
<dbReference type="PDB" id="7S7C">
    <property type="method" value="EM"/>
    <property type="resolution" value="3.62 A"/>
    <property type="chains" value="B/F=1-707"/>
</dbReference>
<dbReference type="PDB" id="7Z4Y">
    <property type="method" value="EM"/>
    <property type="resolution" value="4.50 A"/>
    <property type="chains" value="A/C=41-337"/>
</dbReference>
<dbReference type="PDB" id="7Z4Z">
    <property type="method" value="EM"/>
    <property type="resolution" value="4.00 A"/>
    <property type="chains" value="A/C=41-337"/>
</dbReference>
<dbReference type="PDB" id="7Z52">
    <property type="method" value="EM"/>
    <property type="resolution" value="3.40 A"/>
    <property type="chains" value="A=1-707"/>
</dbReference>
<dbReference type="PDBsum" id="5LXR"/>
<dbReference type="PDBsum" id="5LXY"/>
<dbReference type="PDBsum" id="6C90"/>
<dbReference type="PDBsum" id="7S7B"/>
<dbReference type="PDBsum" id="7S7C"/>
<dbReference type="PDBsum" id="7Z4Y"/>
<dbReference type="PDBsum" id="7Z4Z"/>
<dbReference type="PDBsum" id="7Z52"/>
<dbReference type="EMDB" id="EMD-14510"/>
<dbReference type="EMDB" id="EMD-14511"/>
<dbReference type="EMDB" id="EMD-14513"/>
<dbReference type="EMDB" id="EMD-14514"/>
<dbReference type="EMDB" id="EMD-14515"/>
<dbReference type="EMDB" id="EMD-24882"/>
<dbReference type="EMDB" id="EMD-24883"/>
<dbReference type="EMDB" id="EMD-24884"/>
<dbReference type="SMR" id="Q6NZY4"/>
<dbReference type="BioGRID" id="120739">
    <property type="interactions" value="159"/>
</dbReference>
<dbReference type="ComplexPortal" id="CPX-2735">
    <property type="entry name" value="Nuclear exosome targeting complex"/>
</dbReference>
<dbReference type="CORUM" id="Q6NZY4"/>
<dbReference type="FunCoup" id="Q6NZY4">
    <property type="interactions" value="3670"/>
</dbReference>
<dbReference type="IntAct" id="Q6NZY4">
    <property type="interactions" value="88"/>
</dbReference>
<dbReference type="MINT" id="Q6NZY4"/>
<dbReference type="STRING" id="9606.ENSP00000438993"/>
<dbReference type="GlyCosmos" id="Q6NZY4">
    <property type="glycosylation" value="1 site, 1 glycan"/>
</dbReference>
<dbReference type="GlyGen" id="Q6NZY4">
    <property type="glycosylation" value="1 site, 1 O-linked glycan (1 site)"/>
</dbReference>
<dbReference type="iPTMnet" id="Q6NZY4"/>
<dbReference type="PhosphoSitePlus" id="Q6NZY4"/>
<dbReference type="BioMuta" id="ZCCHC8"/>
<dbReference type="DMDM" id="66774213"/>
<dbReference type="CPTAC" id="CPTAC-1021"/>
<dbReference type="jPOST" id="Q6NZY4"/>
<dbReference type="MassIVE" id="Q6NZY4"/>
<dbReference type="PaxDb" id="9606-ENSP00000438993"/>
<dbReference type="PeptideAtlas" id="Q6NZY4"/>
<dbReference type="ProteomicsDB" id="66798">
    <molecule id="Q6NZY4-1"/>
</dbReference>
<dbReference type="ProteomicsDB" id="66799">
    <molecule id="Q6NZY4-2"/>
</dbReference>
<dbReference type="Pumba" id="Q6NZY4"/>
<dbReference type="Antibodypedia" id="31655">
    <property type="antibodies" value="115 antibodies from 22 providers"/>
</dbReference>
<dbReference type="DNASU" id="55596"/>
<dbReference type="Ensembl" id="ENST00000536306.5">
    <molecule id="Q6NZY4-2"/>
    <property type="protein sequence ID" value="ENSP00000441423.1"/>
    <property type="gene ID" value="ENSG00000033030.16"/>
</dbReference>
<dbReference type="Ensembl" id="ENST00000543897.5">
    <molecule id="Q6NZY4-2"/>
    <property type="protein sequence ID" value="ENSP00000438993.1"/>
    <property type="gene ID" value="ENSG00000033030.16"/>
</dbReference>
<dbReference type="Ensembl" id="ENST00000633063.3">
    <molecule id="Q6NZY4-1"/>
    <property type="protein sequence ID" value="ENSP00000488055.1"/>
    <property type="gene ID" value="ENSG00000033030.16"/>
</dbReference>
<dbReference type="GeneID" id="55596"/>
<dbReference type="KEGG" id="hsa:55596"/>
<dbReference type="MANE-Select" id="ENST00000633063.3">
    <property type="protein sequence ID" value="ENSP00000488055.1"/>
    <property type="RefSeq nucleotide sequence ID" value="NM_017612.5"/>
    <property type="RefSeq protein sequence ID" value="NP_060082.2"/>
</dbReference>
<dbReference type="UCSC" id="uc009zxp.4">
    <molecule id="Q6NZY4-1"/>
    <property type="organism name" value="human"/>
</dbReference>
<dbReference type="AGR" id="HGNC:25265"/>
<dbReference type="CTD" id="55596"/>
<dbReference type="DisGeNET" id="55596"/>
<dbReference type="GeneCards" id="ZCCHC8"/>
<dbReference type="GeneReviews" id="ZCCHC8"/>
<dbReference type="HGNC" id="HGNC:25265">
    <property type="gene designation" value="ZCCHC8"/>
</dbReference>
<dbReference type="HPA" id="ENSG00000033030">
    <property type="expression patterns" value="Tissue enhanced (bone)"/>
</dbReference>
<dbReference type="MalaCards" id="ZCCHC8"/>
<dbReference type="MIM" id="616381">
    <property type="type" value="gene"/>
</dbReference>
<dbReference type="MIM" id="618674">
    <property type="type" value="phenotype"/>
</dbReference>
<dbReference type="neXtProt" id="NX_Q6NZY4"/>
<dbReference type="OpenTargets" id="ENSG00000033030"/>
<dbReference type="PharmGKB" id="PA134889410"/>
<dbReference type="VEuPathDB" id="HostDB:ENSG00000033030"/>
<dbReference type="eggNOG" id="KOG2673">
    <property type="taxonomic scope" value="Eukaryota"/>
</dbReference>
<dbReference type="GeneTree" id="ENSGT00390000011475"/>
<dbReference type="InParanoid" id="Q6NZY4"/>
<dbReference type="OMA" id="DAEVPHG"/>
<dbReference type="OrthoDB" id="8026949at2759"/>
<dbReference type="PAN-GO" id="Q6NZY4">
    <property type="GO annotations" value="3 GO annotations based on evolutionary models"/>
</dbReference>
<dbReference type="PhylomeDB" id="Q6NZY4"/>
<dbReference type="TreeFam" id="TF321837"/>
<dbReference type="PathwayCommons" id="Q6NZY4"/>
<dbReference type="Reactome" id="R-HSA-9843970">
    <property type="pathway name" value="Regulation of endogenous retroelements by the Human Silencing Hub (HUSH) complex"/>
</dbReference>
<dbReference type="SignaLink" id="Q6NZY4"/>
<dbReference type="BioGRID-ORCS" id="55596">
    <property type="hits" value="18 hits in 361 CRISPR screens"/>
</dbReference>
<dbReference type="ChiTaRS" id="ZCCHC8">
    <property type="organism name" value="human"/>
</dbReference>
<dbReference type="GeneWiki" id="ZCCHC8"/>
<dbReference type="GenomeRNAi" id="55596"/>
<dbReference type="Pharos" id="Q6NZY4">
    <property type="development level" value="Tbio"/>
</dbReference>
<dbReference type="PRO" id="PR:Q6NZY4"/>
<dbReference type="Proteomes" id="UP000005640">
    <property type="component" value="Chromosome 12"/>
</dbReference>
<dbReference type="RNAct" id="Q6NZY4">
    <property type="molecule type" value="protein"/>
</dbReference>
<dbReference type="Bgee" id="ENSG00000033030">
    <property type="expression patterns" value="Expressed in cervix squamous epithelium and 194 other cell types or tissues"/>
</dbReference>
<dbReference type="ExpressionAtlas" id="Q6NZY4">
    <property type="expression patterns" value="baseline and differential"/>
</dbReference>
<dbReference type="GO" id="GO:0071013">
    <property type="term" value="C:catalytic step 2 spliceosome"/>
    <property type="evidence" value="ECO:0000314"/>
    <property type="project" value="UniProtKB"/>
</dbReference>
<dbReference type="GO" id="GO:0016604">
    <property type="term" value="C:nuclear body"/>
    <property type="evidence" value="ECO:0000314"/>
    <property type="project" value="HPA"/>
</dbReference>
<dbReference type="GO" id="GO:0005654">
    <property type="term" value="C:nucleoplasm"/>
    <property type="evidence" value="ECO:0000314"/>
    <property type="project" value="HPA"/>
</dbReference>
<dbReference type="GO" id="GO:0005634">
    <property type="term" value="C:nucleus"/>
    <property type="evidence" value="ECO:0000314"/>
    <property type="project" value="UniProtKB"/>
</dbReference>
<dbReference type="GO" id="GO:0031499">
    <property type="term" value="C:TRAMP complex"/>
    <property type="evidence" value="ECO:0000314"/>
    <property type="project" value="UniProtKB"/>
</dbReference>
<dbReference type="GO" id="GO:0003723">
    <property type="term" value="F:RNA binding"/>
    <property type="evidence" value="ECO:0000314"/>
    <property type="project" value="UniProtKB"/>
</dbReference>
<dbReference type="GO" id="GO:0008270">
    <property type="term" value="F:zinc ion binding"/>
    <property type="evidence" value="ECO:0007669"/>
    <property type="project" value="UniProtKB-KW"/>
</dbReference>
<dbReference type="GO" id="GO:0180034">
    <property type="term" value="P:co-transcriptional lncRNA 3' end processing, cleavage and polyadenylation pathway"/>
    <property type="evidence" value="ECO:0000315"/>
    <property type="project" value="UniProtKB"/>
</dbReference>
<dbReference type="GO" id="GO:0031124">
    <property type="term" value="P:mRNA 3'-end processing"/>
    <property type="evidence" value="ECO:0000315"/>
    <property type="project" value="UniProtKB"/>
</dbReference>
<dbReference type="GO" id="GO:0000398">
    <property type="term" value="P:mRNA splicing, via spliceosome"/>
    <property type="evidence" value="ECO:0000305"/>
    <property type="project" value="UniProtKB"/>
</dbReference>
<dbReference type="GO" id="GO:0006396">
    <property type="term" value="P:RNA processing"/>
    <property type="evidence" value="ECO:0000318"/>
    <property type="project" value="GO_Central"/>
</dbReference>
<dbReference type="GO" id="GO:0016076">
    <property type="term" value="P:snRNA catabolic process"/>
    <property type="evidence" value="ECO:0000250"/>
    <property type="project" value="UniProtKB"/>
</dbReference>
<dbReference type="InterPro" id="IPR052115">
    <property type="entry name" value="NEXT_complex_subunit_ZCCHC8"/>
</dbReference>
<dbReference type="InterPro" id="IPR006568">
    <property type="entry name" value="PSP_pro-rich"/>
</dbReference>
<dbReference type="InterPro" id="IPR001878">
    <property type="entry name" value="Znf_CCHC"/>
</dbReference>
<dbReference type="PANTHER" id="PTHR13316:SF0">
    <property type="entry name" value="ZINC FINGER CCHC DOMAIN-CONTAINING PROTEIN 8"/>
    <property type="match status" value="1"/>
</dbReference>
<dbReference type="PANTHER" id="PTHR13316">
    <property type="entry name" value="ZINC FINGER, CCHC DOMAIN CONTAINING 8"/>
    <property type="match status" value="1"/>
</dbReference>
<dbReference type="Pfam" id="PF04046">
    <property type="entry name" value="PSP"/>
    <property type="match status" value="1"/>
</dbReference>
<dbReference type="Pfam" id="PF00098">
    <property type="entry name" value="zf-CCHC"/>
    <property type="match status" value="1"/>
</dbReference>
<dbReference type="SMART" id="SM00581">
    <property type="entry name" value="PSP"/>
    <property type="match status" value="1"/>
</dbReference>
<dbReference type="SMART" id="SM00343">
    <property type="entry name" value="ZnF_C2HC"/>
    <property type="match status" value="1"/>
</dbReference>
<dbReference type="PROSITE" id="PS50158">
    <property type="entry name" value="ZF_CCHC"/>
    <property type="match status" value="1"/>
</dbReference>
<protein>
    <recommendedName>
        <fullName>Zinc finger CCHC domain-containing protein 8</fullName>
    </recommendedName>
    <alternativeName>
        <fullName>TRAMP-like complex RNA-binding factor ZCCHC8</fullName>
    </alternativeName>
</protein>
<accession>Q6NZY4</accession>
<accession>Q7L2P6</accession>
<accession>Q8N2K5</accession>
<accession>Q96SK7</accession>
<accession>Q9NSS2</accession>
<accession>Q9NSS3</accession>